<accession>P23168</accession>
<feature type="chain" id="PRO_0000221952" description="Protein MGF 360-20R">
    <location>
        <begin position="1"/>
        <end position="42"/>
    </location>
</feature>
<feature type="sequence conflict" description="In Ref. 1; AAA42679." evidence="3" ref="1">
    <original>L</original>
    <variation>P</variation>
    <location>
        <position position="10"/>
    </location>
</feature>
<comment type="function">
    <text evidence="1">Plays a role in virus cell tropism, and may be required for efficient virus replication in macrophages.</text>
</comment>
<comment type="induction">
    <text evidence="2">Expressed in the early phase of the viral replicative cycle.</text>
</comment>
<comment type="similarity">
    <text evidence="3">Belongs to the asfivirus MGF 360 family.</text>
</comment>
<dbReference type="EMBL" id="M57545">
    <property type="protein sequence ID" value="AAA42679.1"/>
    <property type="molecule type" value="Genomic_DNA"/>
</dbReference>
<dbReference type="EMBL" id="U18466">
    <property type="protein sequence ID" value="AAA65383.1"/>
    <property type="molecule type" value="Genomic_DNA"/>
</dbReference>
<dbReference type="PIR" id="G43680">
    <property type="entry name" value="G43680"/>
</dbReference>
<dbReference type="RefSeq" id="NP_042847.1">
    <property type="nucleotide sequence ID" value="NC_001659.2"/>
</dbReference>
<dbReference type="GeneID" id="22220383"/>
<dbReference type="KEGG" id="vg:22220383"/>
<dbReference type="Proteomes" id="UP000000624">
    <property type="component" value="Segment"/>
</dbReference>
<organism>
    <name type="scientific">African swine fever virus (strain Badajoz 1971 Vero-adapted)</name>
    <name type="common">Ba71V</name>
    <name type="synonym">ASFV</name>
    <dbReference type="NCBI Taxonomy" id="10498"/>
    <lineage>
        <taxon>Viruses</taxon>
        <taxon>Varidnaviria</taxon>
        <taxon>Bamfordvirae</taxon>
        <taxon>Nucleocytoviricota</taxon>
        <taxon>Pokkesviricetes</taxon>
        <taxon>Asfuvirales</taxon>
        <taxon>Asfarviridae</taxon>
        <taxon>Asfivirus</taxon>
        <taxon>African swine fever virus</taxon>
    </lineage>
</organism>
<reference key="1">
    <citation type="journal article" date="1990" name="J. Virol.">
        <title>Multigene families in African swine fever virus: family 360.</title>
        <authorList>
            <person name="Gonzalez A."/>
            <person name="Calvo V."/>
            <person name="Almazan F."/>
            <person name="Almendral J.M."/>
            <person name="Ramirez J.C."/>
            <person name="de la Vega I."/>
            <person name="Blasco R."/>
            <person name="Vinuela E."/>
        </authorList>
    </citation>
    <scope>NUCLEOTIDE SEQUENCE [GENOMIC DNA]</scope>
</reference>
<reference key="2">
    <citation type="journal article" date="1995" name="Virology">
        <title>Analysis of the complete nucleotide sequence of African swine fever virus.</title>
        <authorList>
            <person name="Yanez R.J."/>
            <person name="Rodriguez J.M."/>
            <person name="Nogal M.L."/>
            <person name="Yuste L."/>
            <person name="Enriquez C."/>
            <person name="Rodriguez J.F."/>
            <person name="Vinuela E."/>
        </authorList>
    </citation>
    <scope>NUCLEOTIDE SEQUENCE [LARGE SCALE GENOMIC DNA]</scope>
</reference>
<reference key="3">
    <citation type="journal article" date="2001" name="J. Virol.">
        <title>African swine fever virus multigene family 360 and 530 genes are novel macrophage host range determinants.</title>
        <authorList>
            <person name="Zsak L."/>
            <person name="Lu Z."/>
            <person name="Burrage T.G."/>
            <person name="Neilan J.G."/>
            <person name="Kutish G.F."/>
            <person name="Moore D.M."/>
            <person name="Rock D.L."/>
        </authorList>
    </citation>
    <scope>FUNCTION</scope>
</reference>
<reference key="4">
    <citation type="journal article" date="2020" name="J. Virol.">
        <title>The African Swine Fever Virus Transcriptome.</title>
        <authorList>
            <person name="Cackett G."/>
            <person name="Matelska D."/>
            <person name="Sykora M."/>
            <person name="Portugal R."/>
            <person name="Malecki M."/>
            <person name="Baehler J."/>
            <person name="Dixon L."/>
            <person name="Werner F."/>
        </authorList>
    </citation>
    <scope>INDUCTION</scope>
</reference>
<organismHost>
    <name type="scientific">Ornithodoros</name>
    <name type="common">relapsing fever ticks</name>
    <dbReference type="NCBI Taxonomy" id="6937"/>
</organismHost>
<organismHost>
    <name type="scientific">Sus scrofa</name>
    <name type="common">Pig</name>
    <dbReference type="NCBI Taxonomy" id="9823"/>
</organismHost>
<name>36020_ASFB7</name>
<protein>
    <recommendedName>
        <fullName>Protein MGF 360-20R</fullName>
    </recommendedName>
</protein>
<gene>
    <name type="ordered locus">BA71V-157</name>
    <name type="ORF">DP42R</name>
</gene>
<sequence length="42" mass="4886">MPTPLSLQALAKKVLATQHISKDHLYFEILWFMVAFFDAYSL</sequence>
<keyword id="KW-0244">Early protein</keyword>
<keyword id="KW-1185">Reference proteome</keyword>
<proteinExistence type="evidence at transcript level"/>
<evidence type="ECO:0000269" key="1">
    <source>
    </source>
</evidence>
<evidence type="ECO:0000269" key="2">
    <source>
    </source>
</evidence>
<evidence type="ECO:0000305" key="3"/>